<comment type="function">
    <text evidence="1">Catalyzes the NADPH-dependent reduction of 7-cyano-7-deazaguanine (preQ0) to 7-aminomethyl-7-deazaguanine (preQ1).</text>
</comment>
<comment type="catalytic activity">
    <reaction evidence="1">
        <text>7-aminomethyl-7-carbaguanine + 2 NADP(+) = 7-cyano-7-deazaguanine + 2 NADPH + 3 H(+)</text>
        <dbReference type="Rhea" id="RHEA:13409"/>
        <dbReference type="ChEBI" id="CHEBI:15378"/>
        <dbReference type="ChEBI" id="CHEBI:45075"/>
        <dbReference type="ChEBI" id="CHEBI:57783"/>
        <dbReference type="ChEBI" id="CHEBI:58349"/>
        <dbReference type="ChEBI" id="CHEBI:58703"/>
        <dbReference type="EC" id="1.7.1.13"/>
    </reaction>
</comment>
<comment type="pathway">
    <text evidence="1">tRNA modification; tRNA-queuosine biosynthesis.</text>
</comment>
<comment type="subunit">
    <text evidence="1">Homodimer.</text>
</comment>
<comment type="subcellular location">
    <subcellularLocation>
        <location evidence="1">Cytoplasm</location>
    </subcellularLocation>
</comment>
<comment type="similarity">
    <text evidence="1">Belongs to the GTP cyclohydrolase I family. QueF type 2 subfamily.</text>
</comment>
<protein>
    <recommendedName>
        <fullName evidence="1">NADPH-dependent 7-cyano-7-deazaguanine reductase</fullName>
        <ecNumber evidence="1">1.7.1.13</ecNumber>
    </recommendedName>
    <alternativeName>
        <fullName evidence="1">7-cyano-7-carbaguanine reductase</fullName>
    </alternativeName>
    <alternativeName>
        <fullName evidence="1">NADPH-dependent nitrile oxidoreductase</fullName>
    </alternativeName>
    <alternativeName>
        <fullName evidence="1">PreQ(0) reductase</fullName>
    </alternativeName>
</protein>
<keyword id="KW-0963">Cytoplasm</keyword>
<keyword id="KW-0521">NADP</keyword>
<keyword id="KW-0560">Oxidoreductase</keyword>
<keyword id="KW-0671">Queuosine biosynthesis</keyword>
<name>QUEF_ACIBY</name>
<feature type="chain" id="PRO_1000193207" description="NADPH-dependent 7-cyano-7-deazaguanine reductase">
    <location>
        <begin position="1"/>
        <end position="270"/>
    </location>
</feature>
<feature type="active site" description="Thioimide intermediate" evidence="1">
    <location>
        <position position="177"/>
    </location>
</feature>
<feature type="active site" description="Proton donor" evidence="1">
    <location>
        <position position="184"/>
    </location>
</feature>
<feature type="binding site" evidence="1">
    <location>
        <begin position="79"/>
        <end position="81"/>
    </location>
    <ligand>
        <name>substrate</name>
    </ligand>
</feature>
<feature type="binding site" evidence="1">
    <location>
        <begin position="81"/>
        <end position="82"/>
    </location>
    <ligand>
        <name>NADPH</name>
        <dbReference type="ChEBI" id="CHEBI:57783"/>
    </ligand>
</feature>
<feature type="binding site" evidence="1">
    <location>
        <begin position="216"/>
        <end position="217"/>
    </location>
    <ligand>
        <name>substrate</name>
    </ligand>
</feature>
<feature type="binding site" evidence="1">
    <location>
        <begin position="245"/>
        <end position="246"/>
    </location>
    <ligand>
        <name>NADPH</name>
        <dbReference type="ChEBI" id="CHEBI:57783"/>
    </ligand>
</feature>
<evidence type="ECO:0000255" key="1">
    <source>
        <dbReference type="HAMAP-Rule" id="MF_00817"/>
    </source>
</evidence>
<organism>
    <name type="scientific">Acinetobacter baumannii (strain AYE)</name>
    <dbReference type="NCBI Taxonomy" id="509173"/>
    <lineage>
        <taxon>Bacteria</taxon>
        <taxon>Pseudomonadati</taxon>
        <taxon>Pseudomonadota</taxon>
        <taxon>Gammaproteobacteria</taxon>
        <taxon>Moraxellales</taxon>
        <taxon>Moraxellaceae</taxon>
        <taxon>Acinetobacter</taxon>
        <taxon>Acinetobacter calcoaceticus/baumannii complex</taxon>
    </lineage>
</organism>
<dbReference type="EC" id="1.7.1.13" evidence="1"/>
<dbReference type="EMBL" id="CU459141">
    <property type="protein sequence ID" value="CAM86091.1"/>
    <property type="molecule type" value="Genomic_DNA"/>
</dbReference>
<dbReference type="RefSeq" id="WP_000110172.1">
    <property type="nucleotide sequence ID" value="NZ_JBDGFB010000005.1"/>
</dbReference>
<dbReference type="SMR" id="B0VBC6"/>
<dbReference type="EnsemblBacteria" id="CAM86091">
    <property type="protein sequence ID" value="CAM86091"/>
    <property type="gene ID" value="ABAYE1164"/>
</dbReference>
<dbReference type="KEGG" id="aby:ABAYE1164"/>
<dbReference type="HOGENOM" id="CLU_054738_0_0_6"/>
<dbReference type="UniPathway" id="UPA00392"/>
<dbReference type="GO" id="GO:0005737">
    <property type="term" value="C:cytoplasm"/>
    <property type="evidence" value="ECO:0007669"/>
    <property type="project" value="UniProtKB-SubCell"/>
</dbReference>
<dbReference type="GO" id="GO:0033739">
    <property type="term" value="F:preQ1 synthase activity"/>
    <property type="evidence" value="ECO:0007669"/>
    <property type="project" value="UniProtKB-UniRule"/>
</dbReference>
<dbReference type="GO" id="GO:0008616">
    <property type="term" value="P:queuosine biosynthetic process"/>
    <property type="evidence" value="ECO:0007669"/>
    <property type="project" value="UniProtKB-UniRule"/>
</dbReference>
<dbReference type="GO" id="GO:0006400">
    <property type="term" value="P:tRNA modification"/>
    <property type="evidence" value="ECO:0007669"/>
    <property type="project" value="UniProtKB-UniRule"/>
</dbReference>
<dbReference type="Gene3D" id="3.30.1130.10">
    <property type="match status" value="2"/>
</dbReference>
<dbReference type="HAMAP" id="MF_00817">
    <property type="entry name" value="QueF_type2"/>
    <property type="match status" value="1"/>
</dbReference>
<dbReference type="InterPro" id="IPR043133">
    <property type="entry name" value="GTP-CH-I_C/QueF"/>
</dbReference>
<dbReference type="InterPro" id="IPR050084">
    <property type="entry name" value="NADPH_dep_7-cyano-7-deazaG_red"/>
</dbReference>
<dbReference type="InterPro" id="IPR029500">
    <property type="entry name" value="QueF"/>
</dbReference>
<dbReference type="InterPro" id="IPR029139">
    <property type="entry name" value="QueF_N"/>
</dbReference>
<dbReference type="InterPro" id="IPR016428">
    <property type="entry name" value="QueF_type2"/>
</dbReference>
<dbReference type="NCBIfam" id="TIGR03138">
    <property type="entry name" value="QueF"/>
    <property type="match status" value="1"/>
</dbReference>
<dbReference type="PANTHER" id="PTHR34354">
    <property type="entry name" value="NADPH-DEPENDENT 7-CYANO-7-DEAZAGUANINE REDUCTASE"/>
    <property type="match status" value="1"/>
</dbReference>
<dbReference type="PANTHER" id="PTHR34354:SF1">
    <property type="entry name" value="NADPH-DEPENDENT 7-CYANO-7-DEAZAGUANINE REDUCTASE"/>
    <property type="match status" value="1"/>
</dbReference>
<dbReference type="Pfam" id="PF14489">
    <property type="entry name" value="QueF"/>
    <property type="match status" value="1"/>
</dbReference>
<dbReference type="Pfam" id="PF14819">
    <property type="entry name" value="QueF_N"/>
    <property type="match status" value="1"/>
</dbReference>
<dbReference type="PIRSF" id="PIRSF004750">
    <property type="entry name" value="Nitrile_oxidored_YqcD_prd"/>
    <property type="match status" value="1"/>
</dbReference>
<dbReference type="SUPFAM" id="SSF55620">
    <property type="entry name" value="Tetrahydrobiopterin biosynthesis enzymes-like"/>
    <property type="match status" value="1"/>
</dbReference>
<proteinExistence type="inferred from homology"/>
<gene>
    <name evidence="1" type="primary">queF</name>
    <name type="ordered locus">ABAYE1164</name>
</gene>
<sequence length="270" mass="30919">MSVEQSLLGKETQYPTSYQPDVLFPIARAQSREKYAHIQGITQGKDWWHVFEISWLNAHGIPQVAIGRITLPASSPNLIESKSLKLYFNSLNFTQFDSTQSFIETVEKDLSAAAGAKVELTLFQVDDLEISKPQGICIDDLMPERLEQHPDATLLKLDESGEEIEVELYSHLLRSNCPVTGQPDWGTVFIRFKGKKPCYRSLLAYIISYRQHNGFHEQCVEQIFADIWQNLQPEKLMVYATYTRRGGLDINPCRVSDLTWMPKPIRLARQ</sequence>
<reference key="1">
    <citation type="journal article" date="2008" name="PLoS ONE">
        <title>Comparative analysis of Acinetobacters: three genomes for three lifestyles.</title>
        <authorList>
            <person name="Vallenet D."/>
            <person name="Nordmann P."/>
            <person name="Barbe V."/>
            <person name="Poirel L."/>
            <person name="Mangenot S."/>
            <person name="Bataille E."/>
            <person name="Dossat C."/>
            <person name="Gas S."/>
            <person name="Kreimeyer A."/>
            <person name="Lenoble P."/>
            <person name="Oztas S."/>
            <person name="Poulain J."/>
            <person name="Segurens B."/>
            <person name="Robert C."/>
            <person name="Abergel C."/>
            <person name="Claverie J.-M."/>
            <person name="Raoult D."/>
            <person name="Medigue C."/>
            <person name="Weissenbach J."/>
            <person name="Cruveiller S."/>
        </authorList>
    </citation>
    <scope>NUCLEOTIDE SEQUENCE [LARGE SCALE GENOMIC DNA]</scope>
    <source>
        <strain>AYE</strain>
    </source>
</reference>
<accession>B0VBC6</accession>